<reference key="1">
    <citation type="journal article" date="2007" name="Proc. Natl. Acad. Sci. U.S.A.">
        <title>Genome sequencing and comparative analysis of Saccharomyces cerevisiae strain YJM789.</title>
        <authorList>
            <person name="Wei W."/>
            <person name="McCusker J.H."/>
            <person name="Hyman R.W."/>
            <person name="Jones T."/>
            <person name="Ning Y."/>
            <person name="Cao Z."/>
            <person name="Gu Z."/>
            <person name="Bruno D."/>
            <person name="Miranda M."/>
            <person name="Nguyen M."/>
            <person name="Wilhelmy J."/>
            <person name="Komp C."/>
            <person name="Tamse R."/>
            <person name="Wang X."/>
            <person name="Jia P."/>
            <person name="Luedi P."/>
            <person name="Oefner P.J."/>
            <person name="David L."/>
            <person name="Dietrich F.S."/>
            <person name="Li Y."/>
            <person name="Davis R.W."/>
            <person name="Steinmetz L.M."/>
        </authorList>
    </citation>
    <scope>NUCLEOTIDE SEQUENCE [LARGE SCALE GENOMIC DNA]</scope>
    <source>
        <strain>YJM789</strain>
    </source>
</reference>
<keyword id="KW-0963">Cytoplasm</keyword>
<keyword id="KW-0349">Heme</keyword>
<keyword id="KW-0376">Hydrogen peroxide</keyword>
<keyword id="KW-0408">Iron</keyword>
<keyword id="KW-0479">Metal-binding</keyword>
<keyword id="KW-0560">Oxidoreductase</keyword>
<keyword id="KW-0575">Peroxidase</keyword>
<protein>
    <recommendedName>
        <fullName>Catalase T</fullName>
        <ecNumber>1.11.1.6</ecNumber>
    </recommendedName>
</protein>
<proteinExistence type="inferred from homology"/>
<organism>
    <name type="scientific">Saccharomyces cerevisiae (strain YJM789)</name>
    <name type="common">Baker's yeast</name>
    <dbReference type="NCBI Taxonomy" id="307796"/>
    <lineage>
        <taxon>Eukaryota</taxon>
        <taxon>Fungi</taxon>
        <taxon>Dikarya</taxon>
        <taxon>Ascomycota</taxon>
        <taxon>Saccharomycotina</taxon>
        <taxon>Saccharomycetes</taxon>
        <taxon>Saccharomycetales</taxon>
        <taxon>Saccharomycetaceae</taxon>
        <taxon>Saccharomyces</taxon>
    </lineage>
</organism>
<dbReference type="EC" id="1.11.1.6"/>
<dbReference type="EMBL" id="AAFW02000102">
    <property type="protein sequence ID" value="EDN61678.1"/>
    <property type="status" value="ALT_INIT"/>
    <property type="molecule type" value="Genomic_DNA"/>
</dbReference>
<dbReference type="SMR" id="A6ZV70"/>
<dbReference type="HOGENOM" id="CLU_010645_2_0_1"/>
<dbReference type="OrthoDB" id="24487at4893"/>
<dbReference type="Proteomes" id="UP000007060">
    <property type="component" value="Unassembled WGS sequence"/>
</dbReference>
<dbReference type="GO" id="GO:0005739">
    <property type="term" value="C:mitochondrion"/>
    <property type="evidence" value="ECO:0007669"/>
    <property type="project" value="TreeGrafter"/>
</dbReference>
<dbReference type="GO" id="GO:0005777">
    <property type="term" value="C:peroxisome"/>
    <property type="evidence" value="ECO:0007669"/>
    <property type="project" value="TreeGrafter"/>
</dbReference>
<dbReference type="GO" id="GO:0004096">
    <property type="term" value="F:catalase activity"/>
    <property type="evidence" value="ECO:0007669"/>
    <property type="project" value="UniProtKB-EC"/>
</dbReference>
<dbReference type="GO" id="GO:0020037">
    <property type="term" value="F:heme binding"/>
    <property type="evidence" value="ECO:0007669"/>
    <property type="project" value="InterPro"/>
</dbReference>
<dbReference type="GO" id="GO:0046872">
    <property type="term" value="F:metal ion binding"/>
    <property type="evidence" value="ECO:0007669"/>
    <property type="project" value="UniProtKB-KW"/>
</dbReference>
<dbReference type="GO" id="GO:0042744">
    <property type="term" value="P:hydrogen peroxide catabolic process"/>
    <property type="evidence" value="ECO:0007669"/>
    <property type="project" value="UniProtKB-KW"/>
</dbReference>
<dbReference type="GO" id="GO:0042542">
    <property type="term" value="P:response to hydrogen peroxide"/>
    <property type="evidence" value="ECO:0007669"/>
    <property type="project" value="TreeGrafter"/>
</dbReference>
<dbReference type="CDD" id="cd08157">
    <property type="entry name" value="catalase_fungal"/>
    <property type="match status" value="1"/>
</dbReference>
<dbReference type="FunFam" id="2.40.180.10:FF:000013">
    <property type="entry name" value="Catalase"/>
    <property type="match status" value="1"/>
</dbReference>
<dbReference type="Gene3D" id="2.40.180.10">
    <property type="entry name" value="Catalase core domain"/>
    <property type="match status" value="1"/>
</dbReference>
<dbReference type="InterPro" id="IPR018028">
    <property type="entry name" value="Catalase"/>
</dbReference>
<dbReference type="InterPro" id="IPR024708">
    <property type="entry name" value="Catalase_AS"/>
</dbReference>
<dbReference type="InterPro" id="IPR024711">
    <property type="entry name" value="Catalase_clade1/3"/>
</dbReference>
<dbReference type="InterPro" id="IPR011614">
    <property type="entry name" value="Catalase_core"/>
</dbReference>
<dbReference type="InterPro" id="IPR002226">
    <property type="entry name" value="Catalase_haem_BS"/>
</dbReference>
<dbReference type="InterPro" id="IPR010582">
    <property type="entry name" value="Catalase_immune_responsive"/>
</dbReference>
<dbReference type="InterPro" id="IPR020835">
    <property type="entry name" value="Catalase_sf"/>
</dbReference>
<dbReference type="PANTHER" id="PTHR11465">
    <property type="entry name" value="CATALASE"/>
    <property type="match status" value="1"/>
</dbReference>
<dbReference type="PANTHER" id="PTHR11465:SF62">
    <property type="entry name" value="CATALASE T"/>
    <property type="match status" value="1"/>
</dbReference>
<dbReference type="Pfam" id="PF00199">
    <property type="entry name" value="Catalase"/>
    <property type="match status" value="1"/>
</dbReference>
<dbReference type="Pfam" id="PF06628">
    <property type="entry name" value="Catalase-rel"/>
    <property type="match status" value="1"/>
</dbReference>
<dbReference type="PIRSF" id="PIRSF038928">
    <property type="entry name" value="Catalase_clade1-3"/>
    <property type="match status" value="1"/>
</dbReference>
<dbReference type="PRINTS" id="PR00067">
    <property type="entry name" value="CATALASE"/>
</dbReference>
<dbReference type="SMART" id="SM01060">
    <property type="entry name" value="Catalase"/>
    <property type="match status" value="1"/>
</dbReference>
<dbReference type="SUPFAM" id="SSF56634">
    <property type="entry name" value="Heme-dependent catalase-like"/>
    <property type="match status" value="1"/>
</dbReference>
<dbReference type="PROSITE" id="PS00437">
    <property type="entry name" value="CATALASE_1"/>
    <property type="match status" value="1"/>
</dbReference>
<dbReference type="PROSITE" id="PS00438">
    <property type="entry name" value="CATALASE_2"/>
    <property type="match status" value="1"/>
</dbReference>
<dbReference type="PROSITE" id="PS51402">
    <property type="entry name" value="CATALASE_3"/>
    <property type="match status" value="1"/>
</dbReference>
<name>CATT_YEAS7</name>
<sequence length="562" mass="64567">MNVFGKKEEKQEKVYSLQNGFPYSHHPYASQYSRPDGPILLQDFHLLENIASFDRERVPERVVHAKGGGCRLEFELTDSLSDITYAAPYQNVGYKCPGLVRFSTVGGESGTPDTARDPRGVSFKFYTEWGNHDWVFNNTPVFFLRDAIKFPVFIHSQKRDPQSHLNQFQDTTIYWDYLTLNPESIHQITYMFGDRGTPASWASMNAYSGHSFIMVNKEGKDTYVQFHVLSDTGFETLTGDKAAELSGSHPDYNQTKLFTQLQNGEKPKFNCYVQTMTPEQATKFRYSVNDLTKIWPHKEFPLRKFGTITLTENVDNYFQEIEQVAFSPTNTCIPGIKPSNDSVLQARLFSYPDTQRHRLGANYQQLPVNRPRNLGCPYSKGDSQYTAEQCPFKAVNFQRDGPMSYYNFGPEPNYISSLPNQTLKFKNEDNDEVSDKFKGIVLDEVTEVSVRKQEQDQIRNEHIVDAKINQYYYVYGISPLDFEQPRALYEKVYNDEQKKLFVHNVVCHACKIKDPKVKKRVTQYFGLLNEDLGKVIAEGLGVPWEPVDLEGYAKTWSIASAN</sequence>
<accession>A6ZV70</accession>
<comment type="function">
    <text evidence="1">Occurs in almost all aerobically respiring organisms and serves to protect cells from the toxic effects of hydrogen peroxide.</text>
</comment>
<comment type="catalytic activity">
    <reaction evidence="2">
        <text>2 H2O2 = O2 + 2 H2O</text>
        <dbReference type="Rhea" id="RHEA:20309"/>
        <dbReference type="ChEBI" id="CHEBI:15377"/>
        <dbReference type="ChEBI" id="CHEBI:15379"/>
        <dbReference type="ChEBI" id="CHEBI:16240"/>
        <dbReference type="EC" id="1.11.1.6"/>
    </reaction>
</comment>
<comment type="cofactor">
    <cofactor evidence="1">
        <name>heme</name>
        <dbReference type="ChEBI" id="CHEBI:30413"/>
    </cofactor>
</comment>
<comment type="subunit">
    <text evidence="1">Homotetramer.</text>
</comment>
<comment type="subcellular location">
    <subcellularLocation>
        <location evidence="1">Cytoplasm</location>
    </subcellularLocation>
</comment>
<comment type="miscellaneous">
    <text>This is one of two catalases in S.cerevisiae; the other is catalase A, which is the peroxisomal form.</text>
</comment>
<comment type="similarity">
    <text evidence="3">Belongs to the catalase family.</text>
</comment>
<comment type="sequence caution" evidence="3">
    <conflict type="erroneous initiation">
        <sequence resource="EMBL-CDS" id="EDN61678"/>
    </conflict>
</comment>
<gene>
    <name type="primary">CTT1</name>
    <name type="ORF">SCY_2303</name>
</gene>
<evidence type="ECO:0000250" key="1"/>
<evidence type="ECO:0000255" key="2">
    <source>
        <dbReference type="PROSITE-ProRule" id="PRU10013"/>
    </source>
</evidence>
<evidence type="ECO:0000305" key="3"/>
<feature type="chain" id="PRO_0000330223" description="Catalase T">
    <location>
        <begin position="1"/>
        <end position="562"/>
    </location>
</feature>
<feature type="active site" evidence="2">
    <location>
        <position position="64"/>
    </location>
</feature>
<feature type="active site" evidence="2">
    <location>
        <position position="137"/>
    </location>
</feature>
<feature type="binding site" description="axial binding residue" evidence="1">
    <location>
        <position position="351"/>
    </location>
    <ligand>
        <name>heme</name>
        <dbReference type="ChEBI" id="CHEBI:30413"/>
    </ligand>
    <ligandPart>
        <name>Fe</name>
        <dbReference type="ChEBI" id="CHEBI:18248"/>
    </ligandPart>
</feature>